<dbReference type="EC" id="2.1.1.189" evidence="1"/>
<dbReference type="EMBL" id="CP000446">
    <property type="protein sequence ID" value="ABI37897.1"/>
    <property type="molecule type" value="Genomic_DNA"/>
</dbReference>
<dbReference type="RefSeq" id="WP_011621612.1">
    <property type="nucleotide sequence ID" value="NC_008321.1"/>
</dbReference>
<dbReference type="SMR" id="Q0HM20"/>
<dbReference type="KEGG" id="she:Shewmr4_0817"/>
<dbReference type="HOGENOM" id="CLU_014689_0_0_6"/>
<dbReference type="GO" id="GO:0051539">
    <property type="term" value="F:4 iron, 4 sulfur cluster binding"/>
    <property type="evidence" value="ECO:0007669"/>
    <property type="project" value="UniProtKB-KW"/>
</dbReference>
<dbReference type="GO" id="GO:0005506">
    <property type="term" value="F:iron ion binding"/>
    <property type="evidence" value="ECO:0007669"/>
    <property type="project" value="UniProtKB-UniRule"/>
</dbReference>
<dbReference type="GO" id="GO:0070041">
    <property type="term" value="F:rRNA (uridine-C5-)-methyltransferase activity"/>
    <property type="evidence" value="ECO:0007669"/>
    <property type="project" value="UniProtKB-UniRule"/>
</dbReference>
<dbReference type="GO" id="GO:0070475">
    <property type="term" value="P:rRNA base methylation"/>
    <property type="evidence" value="ECO:0007669"/>
    <property type="project" value="TreeGrafter"/>
</dbReference>
<dbReference type="CDD" id="cd02440">
    <property type="entry name" value="AdoMet_MTases"/>
    <property type="match status" value="1"/>
</dbReference>
<dbReference type="FunFam" id="2.40.50.1070:FF:000002">
    <property type="entry name" value="23S rRNA (uracil(747)-C(5))-methyltransferase RlmC"/>
    <property type="match status" value="1"/>
</dbReference>
<dbReference type="Gene3D" id="2.40.50.1070">
    <property type="match status" value="1"/>
</dbReference>
<dbReference type="Gene3D" id="3.40.50.150">
    <property type="entry name" value="Vaccinia Virus protein VP39"/>
    <property type="match status" value="1"/>
</dbReference>
<dbReference type="HAMAP" id="MF_01012">
    <property type="entry name" value="23SrRNA_methyltr_RlmC"/>
    <property type="match status" value="1"/>
</dbReference>
<dbReference type="InterPro" id="IPR011825">
    <property type="entry name" value="23SrRNA_MeTrfase_RlmC"/>
</dbReference>
<dbReference type="InterPro" id="IPR030390">
    <property type="entry name" value="MeTrfase_TrmA_AS"/>
</dbReference>
<dbReference type="InterPro" id="IPR030391">
    <property type="entry name" value="MeTrfase_TrmA_CS"/>
</dbReference>
<dbReference type="InterPro" id="IPR029063">
    <property type="entry name" value="SAM-dependent_MTases_sf"/>
</dbReference>
<dbReference type="InterPro" id="IPR010280">
    <property type="entry name" value="U5_MeTrfase_fam"/>
</dbReference>
<dbReference type="NCBIfam" id="TIGR02085">
    <property type="entry name" value="meth_trns_rumB"/>
    <property type="match status" value="1"/>
</dbReference>
<dbReference type="PANTHER" id="PTHR11061">
    <property type="entry name" value="RNA M5U METHYLTRANSFERASE"/>
    <property type="match status" value="1"/>
</dbReference>
<dbReference type="PANTHER" id="PTHR11061:SF30">
    <property type="entry name" value="TRNA (URACIL(54)-C(5))-METHYLTRANSFERASE"/>
    <property type="match status" value="1"/>
</dbReference>
<dbReference type="Pfam" id="PF05958">
    <property type="entry name" value="tRNA_U5-meth_tr"/>
    <property type="match status" value="1"/>
</dbReference>
<dbReference type="SUPFAM" id="SSF53335">
    <property type="entry name" value="S-adenosyl-L-methionine-dependent methyltransferases"/>
    <property type="match status" value="1"/>
</dbReference>
<dbReference type="PROSITE" id="PS51687">
    <property type="entry name" value="SAM_MT_RNA_M5U"/>
    <property type="match status" value="1"/>
</dbReference>
<dbReference type="PROSITE" id="PS01230">
    <property type="entry name" value="TRMA_1"/>
    <property type="match status" value="1"/>
</dbReference>
<dbReference type="PROSITE" id="PS01231">
    <property type="entry name" value="TRMA_2"/>
    <property type="match status" value="1"/>
</dbReference>
<protein>
    <recommendedName>
        <fullName evidence="1">23S rRNA (uracil(747)-C(5))-methyltransferase RlmC</fullName>
        <ecNumber evidence="1">2.1.1.189</ecNumber>
    </recommendedName>
    <alternativeName>
        <fullName evidence="1">23S rRNA(m5U747)-methyltransferase</fullName>
    </alternativeName>
</protein>
<gene>
    <name evidence="1" type="primary">rlmC</name>
    <name type="synonym">rumB</name>
    <name type="ordered locus">Shewmr4_0817</name>
</gene>
<accession>Q0HM20</accession>
<evidence type="ECO:0000255" key="1">
    <source>
        <dbReference type="HAMAP-Rule" id="MF_01012"/>
    </source>
</evidence>
<reference key="1">
    <citation type="submission" date="2006-08" db="EMBL/GenBank/DDBJ databases">
        <title>Complete sequence of Shewanella sp. MR-4.</title>
        <authorList>
            <consortium name="US DOE Joint Genome Institute"/>
            <person name="Copeland A."/>
            <person name="Lucas S."/>
            <person name="Lapidus A."/>
            <person name="Barry K."/>
            <person name="Detter J.C."/>
            <person name="Glavina del Rio T."/>
            <person name="Hammon N."/>
            <person name="Israni S."/>
            <person name="Dalin E."/>
            <person name="Tice H."/>
            <person name="Pitluck S."/>
            <person name="Kiss H."/>
            <person name="Brettin T."/>
            <person name="Bruce D."/>
            <person name="Han C."/>
            <person name="Tapia R."/>
            <person name="Gilna P."/>
            <person name="Schmutz J."/>
            <person name="Larimer F."/>
            <person name="Land M."/>
            <person name="Hauser L."/>
            <person name="Kyrpides N."/>
            <person name="Mikhailova N."/>
            <person name="Nealson K."/>
            <person name="Konstantinidis K."/>
            <person name="Klappenbach J."/>
            <person name="Tiedje J."/>
            <person name="Richardson P."/>
        </authorList>
    </citation>
    <scope>NUCLEOTIDE SEQUENCE [LARGE SCALE GENOMIC DNA]</scope>
    <source>
        <strain>MR-4</strain>
    </source>
</reference>
<comment type="function">
    <text evidence="1">Catalyzes the formation of 5-methyl-uridine at position 747 (m5U747) in 23S rRNA.</text>
</comment>
<comment type="catalytic activity">
    <reaction evidence="1">
        <text>uridine(747) in 23S rRNA + S-adenosyl-L-methionine = 5-methyluridine(747) in 23S rRNA + S-adenosyl-L-homocysteine + H(+)</text>
        <dbReference type="Rhea" id="RHEA:42628"/>
        <dbReference type="Rhea" id="RHEA-COMP:10154"/>
        <dbReference type="Rhea" id="RHEA-COMP:10155"/>
        <dbReference type="ChEBI" id="CHEBI:15378"/>
        <dbReference type="ChEBI" id="CHEBI:57856"/>
        <dbReference type="ChEBI" id="CHEBI:59789"/>
        <dbReference type="ChEBI" id="CHEBI:65315"/>
        <dbReference type="ChEBI" id="CHEBI:74447"/>
        <dbReference type="EC" id="2.1.1.189"/>
    </reaction>
</comment>
<comment type="similarity">
    <text evidence="1">Belongs to the class I-like SAM-binding methyltransferase superfamily. RNA M5U methyltransferase family. RlmC subfamily.</text>
</comment>
<name>RLMC_SHESM</name>
<organism>
    <name type="scientific">Shewanella sp. (strain MR-4)</name>
    <dbReference type="NCBI Taxonomy" id="60480"/>
    <lineage>
        <taxon>Bacteria</taxon>
        <taxon>Pseudomonadati</taxon>
        <taxon>Pseudomonadota</taxon>
        <taxon>Gammaproteobacteria</taxon>
        <taxon>Alteromonadales</taxon>
        <taxon>Shewanellaceae</taxon>
        <taxon>Shewanella</taxon>
    </lineage>
</organism>
<sequence>MSTLVQCGYFERGQCQSCRHIKLPMAQQLAAKTQELQQLLAPFVDNAEPQFLPPVVGDSSGFRNKAKMVALGAAHAPVLGIVSPSGEAVSLCDCLLYPADMQALLHRLERFVQQAGIPPYRVDKAKGELKFILLTRSQVRGEYMLRFVLRSRDAIARIERELPALMAEYPQIKVVSVNLQPVHMAILEGEEEIFLTENTRLEERFNDVPLFIRPKSFFQTNPQVAAKLYQTAREWVADFAPASLWDLFCGVGGFGLHCAAKDIPLTGIEIEAEAIACAKMSAQLMGLDKVQFMALDSTDFAKGDAAQTKPELIIVNPPRRGIGESLCHSLSEFAPKAILYSSCNPKTLAKDLGHIRGYRLTKVQLFDLFPHSDHFEVLALLVKD</sequence>
<feature type="chain" id="PRO_0000282015" description="23S rRNA (uracil(747)-C(5))-methyltransferase RlmC">
    <location>
        <begin position="1"/>
        <end position="384"/>
    </location>
</feature>
<feature type="active site" description="Nucleophile" evidence="1">
    <location>
        <position position="343"/>
    </location>
</feature>
<feature type="binding site" evidence="1">
    <location>
        <position position="7"/>
    </location>
    <ligand>
        <name>[4Fe-4S] cluster</name>
        <dbReference type="ChEBI" id="CHEBI:49883"/>
    </ligand>
</feature>
<feature type="binding site" evidence="1">
    <location>
        <position position="15"/>
    </location>
    <ligand>
        <name>[4Fe-4S] cluster</name>
        <dbReference type="ChEBI" id="CHEBI:49883"/>
    </ligand>
</feature>
<feature type="binding site" evidence="1">
    <location>
        <position position="18"/>
    </location>
    <ligand>
        <name>[4Fe-4S] cluster</name>
        <dbReference type="ChEBI" id="CHEBI:49883"/>
    </ligand>
</feature>
<feature type="binding site" evidence="1">
    <location>
        <position position="94"/>
    </location>
    <ligand>
        <name>[4Fe-4S] cluster</name>
        <dbReference type="ChEBI" id="CHEBI:49883"/>
    </ligand>
</feature>
<feature type="binding site" evidence="1">
    <location>
        <position position="219"/>
    </location>
    <ligand>
        <name>S-adenosyl-L-methionine</name>
        <dbReference type="ChEBI" id="CHEBI:59789"/>
    </ligand>
</feature>
<feature type="binding site" evidence="1">
    <location>
        <position position="248"/>
    </location>
    <ligand>
        <name>S-adenosyl-L-methionine</name>
        <dbReference type="ChEBI" id="CHEBI:59789"/>
    </ligand>
</feature>
<feature type="binding site" evidence="1">
    <location>
        <position position="269"/>
    </location>
    <ligand>
        <name>S-adenosyl-L-methionine</name>
        <dbReference type="ChEBI" id="CHEBI:59789"/>
    </ligand>
</feature>
<feature type="binding site" evidence="1">
    <location>
        <position position="316"/>
    </location>
    <ligand>
        <name>S-adenosyl-L-methionine</name>
        <dbReference type="ChEBI" id="CHEBI:59789"/>
    </ligand>
</feature>
<proteinExistence type="inferred from homology"/>
<keyword id="KW-0004">4Fe-4S</keyword>
<keyword id="KW-0408">Iron</keyword>
<keyword id="KW-0411">Iron-sulfur</keyword>
<keyword id="KW-0479">Metal-binding</keyword>
<keyword id="KW-0489">Methyltransferase</keyword>
<keyword id="KW-0698">rRNA processing</keyword>
<keyword id="KW-0949">S-adenosyl-L-methionine</keyword>
<keyword id="KW-0808">Transferase</keyword>